<comment type="function">
    <text evidence="5 6">Essential for male fertility, spermiogenesis and acrosome formation.</text>
</comment>
<comment type="subunit">
    <text evidence="5">Interacts with the CCT chaperonin complex and actin.</text>
</comment>
<comment type="subcellular location">
    <subcellularLocation>
        <location evidence="6">Endoplasmic reticulum</location>
    </subcellularLocation>
</comment>
<comment type="alternative products">
    <event type="alternative splicing"/>
    <isoform>
        <id>Q78Y63-1</id>
        <name>1</name>
        <sequence type="displayed"/>
    </isoform>
    <isoform>
        <id>Q78Y63-2</id>
        <name>2</name>
        <sequence type="described" ref="VSP_022360"/>
    </isoform>
</comment>
<comment type="tissue specificity">
    <text evidence="5 6">Testis-specific (at protein level).</text>
</comment>
<comment type="disruption phenotype">
    <text evidence="5 6">Male mice are infertile, show severe defects in spermatogenesis and exhibit lower testis weight, epididymis weight, sperm number and malformed and immotile sperm. Show dramatic abnormalities in acrosome formation and in proper sperm head and tail development.</text>
</comment>
<comment type="similarity">
    <text evidence="8">Belongs to the phosducin family.</text>
</comment>
<comment type="caution">
    <text evidence="3 4 9">Reported to be expressed in male and female germ cells, to be up-regulated at the protein level as early as 3 hours after chorionic gonadotropin treatment in the ovary, and to interact with 14-3-3 proteins (PubMed:12424248). However, the publication has been retracted due to image duplication and manipulation. The nucleotide sequence has been confirmed by other studies (PubMed:11116088).</text>
</comment>
<accession>Q78Y63</accession>
<accession>Q3V0H7</accession>
<accession>Q9DA99</accession>
<accession>Q9WUP3</accession>
<protein>
    <recommendedName>
        <fullName>Phosducin-like protein 2</fullName>
    </recommendedName>
    <alternativeName>
        <fullName>MgcPhLP</fullName>
    </alternativeName>
    <alternativeName>
        <fullName>Phosducin-like protein similar 1</fullName>
    </alternativeName>
</protein>
<dbReference type="EMBL" id="AK005602">
    <property type="protein sequence ID" value="BAB24145.1"/>
    <property type="molecule type" value="mRNA"/>
</dbReference>
<dbReference type="EMBL" id="AK005814">
    <property type="protein sequence ID" value="BAB24251.1"/>
    <property type="molecule type" value="mRNA"/>
</dbReference>
<dbReference type="EMBL" id="AK006040">
    <property type="protein sequence ID" value="BAB24379.1"/>
    <property type="molecule type" value="mRNA"/>
</dbReference>
<dbReference type="EMBL" id="AK132738">
    <property type="protein sequence ID" value="BAE21326.1"/>
    <property type="molecule type" value="mRNA"/>
</dbReference>
<dbReference type="EMBL" id="AK133140">
    <property type="protein sequence ID" value="BAE21527.1"/>
    <property type="molecule type" value="mRNA"/>
</dbReference>
<dbReference type="EMBL" id="BC048432">
    <property type="protein sequence ID" value="AAH48432.1"/>
    <property type="molecule type" value="mRNA"/>
</dbReference>
<dbReference type="EMBL" id="AF146793">
    <property type="protein sequence ID" value="AAD30564.2"/>
    <property type="molecule type" value="Genomic_DNA"/>
</dbReference>
<dbReference type="CCDS" id="CCDS39116.1">
    <molecule id="Q78Y63-1"/>
</dbReference>
<dbReference type="CCDS" id="CCDS80304.1">
    <molecule id="Q78Y63-2"/>
</dbReference>
<dbReference type="RefSeq" id="NP_001297566.1">
    <molecule id="Q78Y63-2"/>
    <property type="nucleotide sequence ID" value="NM_001310637.1"/>
</dbReference>
<dbReference type="RefSeq" id="NP_075997.1">
    <molecule id="Q78Y63-1"/>
    <property type="nucleotide sequence ID" value="NM_023508.7"/>
</dbReference>
<dbReference type="PDB" id="2DBC">
    <property type="method" value="NMR"/>
    <property type="chains" value="A=88-209"/>
</dbReference>
<dbReference type="PDBsum" id="2DBC"/>
<dbReference type="SMR" id="Q78Y63"/>
<dbReference type="FunCoup" id="Q78Y63">
    <property type="interactions" value="316"/>
</dbReference>
<dbReference type="STRING" id="10090.ENSMUSP00000031145"/>
<dbReference type="iPTMnet" id="Q78Y63"/>
<dbReference type="PhosphoSitePlus" id="Q78Y63"/>
<dbReference type="SwissPalm" id="Q78Y63"/>
<dbReference type="PaxDb" id="10090-ENSMUSP00000031145"/>
<dbReference type="ProteomicsDB" id="289332">
    <molecule id="Q78Y63-1"/>
</dbReference>
<dbReference type="ProteomicsDB" id="289333">
    <molecule id="Q78Y63-2"/>
</dbReference>
<dbReference type="Antibodypedia" id="44095">
    <property type="antibodies" value="77 antibodies from 23 providers"/>
</dbReference>
<dbReference type="DNASU" id="79455"/>
<dbReference type="Ensembl" id="ENSMUST00000031145.7">
    <molecule id="Q78Y63-1"/>
    <property type="protein sequence ID" value="ENSMUSP00000031145.7"/>
    <property type="gene ID" value="ENSMUSG00000029235.15"/>
</dbReference>
<dbReference type="Ensembl" id="ENSMUST00000122213.8">
    <molecule id="Q78Y63-2"/>
    <property type="protein sequence ID" value="ENSMUSP00000113699.2"/>
    <property type="gene ID" value="ENSMUSG00000029235.15"/>
</dbReference>
<dbReference type="GeneID" id="79455"/>
<dbReference type="KEGG" id="mmu:79455"/>
<dbReference type="UCSC" id="uc008xuu.1">
    <molecule id="Q78Y63-1"/>
    <property type="organism name" value="mouse"/>
</dbReference>
<dbReference type="AGR" id="MGI:1890655"/>
<dbReference type="CTD" id="132954"/>
<dbReference type="MGI" id="MGI:1890655">
    <property type="gene designation" value="Pdcl2"/>
</dbReference>
<dbReference type="VEuPathDB" id="HostDB:ENSMUSG00000029235"/>
<dbReference type="eggNOG" id="KOG3170">
    <property type="taxonomic scope" value="Eukaryota"/>
</dbReference>
<dbReference type="GeneTree" id="ENSGT00940000160654"/>
<dbReference type="HOGENOM" id="CLU_072604_0_1_1"/>
<dbReference type="InParanoid" id="Q78Y63"/>
<dbReference type="OMA" id="DSCIQHY"/>
<dbReference type="OrthoDB" id="45518at2759"/>
<dbReference type="PhylomeDB" id="Q78Y63"/>
<dbReference type="TreeFam" id="TF315179"/>
<dbReference type="BioGRID-ORCS" id="79455">
    <property type="hits" value="1 hit in 77 CRISPR screens"/>
</dbReference>
<dbReference type="EvolutionaryTrace" id="Q78Y63"/>
<dbReference type="PRO" id="PR:Q78Y63"/>
<dbReference type="Proteomes" id="UP000000589">
    <property type="component" value="Chromosome 5"/>
</dbReference>
<dbReference type="RNAct" id="Q78Y63">
    <property type="molecule type" value="protein"/>
</dbReference>
<dbReference type="Bgee" id="ENSMUSG00000029235">
    <property type="expression patterns" value="Expressed in seminiferous tubule of testis and 13 other cell types or tissues"/>
</dbReference>
<dbReference type="GO" id="GO:0005783">
    <property type="term" value="C:endoplasmic reticulum"/>
    <property type="evidence" value="ECO:0000314"/>
    <property type="project" value="UniProtKB"/>
</dbReference>
<dbReference type="GO" id="GO:0001675">
    <property type="term" value="P:acrosome assembly"/>
    <property type="evidence" value="ECO:0000315"/>
    <property type="project" value="UniProtKB"/>
</dbReference>
<dbReference type="GO" id="GO:0030317">
    <property type="term" value="P:flagellated sperm motility"/>
    <property type="evidence" value="ECO:0000315"/>
    <property type="project" value="MGI"/>
</dbReference>
<dbReference type="GO" id="GO:0007288">
    <property type="term" value="P:sperm axoneme assembly"/>
    <property type="evidence" value="ECO:0000315"/>
    <property type="project" value="MGI"/>
</dbReference>
<dbReference type="GO" id="GO:0120316">
    <property type="term" value="P:sperm flagellum assembly"/>
    <property type="evidence" value="ECO:0000315"/>
    <property type="project" value="MGI"/>
</dbReference>
<dbReference type="GO" id="GO:0007286">
    <property type="term" value="P:spermatid development"/>
    <property type="evidence" value="ECO:0000315"/>
    <property type="project" value="UniProtKB"/>
</dbReference>
<dbReference type="CDD" id="cd02988">
    <property type="entry name" value="Phd_like_VIAF"/>
    <property type="match status" value="1"/>
</dbReference>
<dbReference type="Gene3D" id="3.40.30.10">
    <property type="entry name" value="Glutaredoxin"/>
    <property type="match status" value="1"/>
</dbReference>
<dbReference type="InterPro" id="IPR051498">
    <property type="entry name" value="Phosducin-like_chap/apop_reg"/>
</dbReference>
<dbReference type="InterPro" id="IPR024253">
    <property type="entry name" value="Phosducin_thioredoxin-like_dom"/>
</dbReference>
<dbReference type="InterPro" id="IPR036249">
    <property type="entry name" value="Thioredoxin-like_sf"/>
</dbReference>
<dbReference type="PANTHER" id="PTHR45809:SF1">
    <property type="entry name" value="PHOSDUCIN-LIKE PROTEIN 2"/>
    <property type="match status" value="1"/>
</dbReference>
<dbReference type="PANTHER" id="PTHR45809">
    <property type="entry name" value="VIRAL IAP-ASSOCIATED FACTOR HOMOLOG"/>
    <property type="match status" value="1"/>
</dbReference>
<dbReference type="Pfam" id="PF02114">
    <property type="entry name" value="Phosducin"/>
    <property type="match status" value="1"/>
</dbReference>
<dbReference type="SUPFAM" id="SSF52833">
    <property type="entry name" value="Thioredoxin-like"/>
    <property type="match status" value="1"/>
</dbReference>
<sequence>MQDPNEDTEWNEILRNFGILPPKEEPKDEIEEMVLRLQQEAMVKPYEKMTLAQLKEAEDEFDEEDIKAIEIYREKRLQEWKALKKKQKFGELREISGNQYVNEVTNAEKDLWVVIHLYRSSVPMCLVVNQHLSVLARKFPETKFVKAIVNSCIEHYHDNCLPTIFVYKNGQIEGKFIGIIECGGINLKLEELEWKLSEVGAIQSDLEENPKKGIADMMVSSIRNISIYDSDSSGSDTEAK</sequence>
<evidence type="ECO:0000250" key="1"/>
<evidence type="ECO:0000255" key="2"/>
<evidence type="ECO:0000269" key="3">
    <source>
    </source>
</evidence>
<evidence type="ECO:0000269" key="4">
    <source>
    </source>
</evidence>
<evidence type="ECO:0000269" key="5">
    <source>
    </source>
</evidence>
<evidence type="ECO:0000269" key="6">
    <source>
    </source>
</evidence>
<evidence type="ECO:0000303" key="7">
    <source>
    </source>
</evidence>
<evidence type="ECO:0000305" key="8"/>
<evidence type="ECO:0000305" key="9">
    <source>
    </source>
</evidence>
<evidence type="ECO:0007829" key="10">
    <source>
        <dbReference type="PDB" id="2DBC"/>
    </source>
</evidence>
<proteinExistence type="evidence at protein level"/>
<name>PDCL2_MOUSE</name>
<gene>
    <name type="primary">Pdcl2</name>
</gene>
<feature type="chain" id="PRO_0000246158" description="Phosducin-like protein 2">
    <location>
        <begin position="1"/>
        <end position="240"/>
    </location>
</feature>
<feature type="domain" description="Phosducin" evidence="2">
    <location>
        <begin position="38"/>
        <end position="201"/>
    </location>
</feature>
<feature type="region of interest" description="Thioredoxin fold" evidence="1">
    <location>
        <begin position="89"/>
        <end position="240"/>
    </location>
</feature>
<feature type="splice variant" id="VSP_022360" description="In isoform 2." evidence="7">
    <location>
        <begin position="1"/>
        <end position="48"/>
    </location>
</feature>
<feature type="sequence conflict" description="In Ref. 5; AAD30564." evidence="8" ref="5">
    <original>N</original>
    <variation>T</variation>
    <location>
        <position position="209"/>
    </location>
</feature>
<feature type="sequence conflict" description="In Ref. 3; BAB24379." evidence="8" ref="3">
    <original>PKK</original>
    <variation>TKR</variation>
    <location>
        <begin position="210"/>
        <end position="212"/>
    </location>
</feature>
<feature type="helix" evidence="10">
    <location>
        <begin position="97"/>
        <end position="103"/>
    </location>
</feature>
<feature type="turn" evidence="10">
    <location>
        <begin position="104"/>
        <end position="106"/>
    </location>
</feature>
<feature type="strand" evidence="10">
    <location>
        <begin position="112"/>
        <end position="117"/>
    </location>
</feature>
<feature type="helix" evidence="10">
    <location>
        <begin position="123"/>
        <end position="138"/>
    </location>
</feature>
<feature type="strand" evidence="10">
    <location>
        <begin position="140"/>
        <end position="147"/>
    </location>
</feature>
<feature type="strand" evidence="10">
    <location>
        <begin position="150"/>
        <end position="152"/>
    </location>
</feature>
<feature type="strand" evidence="10">
    <location>
        <begin position="162"/>
        <end position="171"/>
    </location>
</feature>
<feature type="strand" evidence="10">
    <location>
        <begin position="173"/>
        <end position="178"/>
    </location>
</feature>
<feature type="turn" evidence="10">
    <location>
        <begin position="179"/>
        <end position="183"/>
    </location>
</feature>
<feature type="helix" evidence="10">
    <location>
        <begin position="189"/>
        <end position="199"/>
    </location>
</feature>
<reference key="1">
    <citation type="journal article" date="2003" name="J. Biol. Chem.">
        <title>A novel germ line-specific gene of the phosducin-like protein (PhLP) family. A meiotic function conserved from yeast to mice.</title>
        <authorList>
            <person name="Lopez P."/>
            <person name="Yaman R."/>
            <person name="Lopez-Fernandez L.A."/>
            <person name="Vidal F."/>
            <person name="Puel D."/>
            <person name="Clertant P."/>
            <person name="Cuzin F."/>
            <person name="Rassoulzadegan M."/>
        </authorList>
    </citation>
    <scope>NUCLEOTIDE SEQUENCE [MRNA]</scope>
    <scope>RETRACTED PAPER</scope>
    <source>
        <strain>C57BL/6 X DBA/2</strain>
        <tissue>Testis</tissue>
    </source>
</reference>
<reference key="2">
    <citation type="journal article" date="2019" name="J. Biol. Chem.">
        <title>Withdrawal: A novel germ line-specific gene of the phosducin-like protein (PhLP) family: A meiotic function conserved from yeast to mice.</title>
        <authorList>
            <person name="Lopez P."/>
            <person name="Yaman R."/>
            <person name="Lopez-Fernandez L.A."/>
            <person name="Vidal F."/>
            <person name="Puel D."/>
            <person name="Clertant P."/>
            <person name="Cuzin F."/>
            <person name="Rassoulzadegan M."/>
        </authorList>
    </citation>
    <scope>RETRACTION NOTICE OF PUBMED:12424248</scope>
</reference>
<reference key="3">
    <citation type="journal article" date="2005" name="Science">
        <title>The transcriptional landscape of the mammalian genome.</title>
        <authorList>
            <person name="Carninci P."/>
            <person name="Kasukawa T."/>
            <person name="Katayama S."/>
            <person name="Gough J."/>
            <person name="Frith M.C."/>
            <person name="Maeda N."/>
            <person name="Oyama R."/>
            <person name="Ravasi T."/>
            <person name="Lenhard B."/>
            <person name="Wells C."/>
            <person name="Kodzius R."/>
            <person name="Shimokawa K."/>
            <person name="Bajic V.B."/>
            <person name="Brenner S.E."/>
            <person name="Batalov S."/>
            <person name="Forrest A.R."/>
            <person name="Zavolan M."/>
            <person name="Davis M.J."/>
            <person name="Wilming L.G."/>
            <person name="Aidinis V."/>
            <person name="Allen J.E."/>
            <person name="Ambesi-Impiombato A."/>
            <person name="Apweiler R."/>
            <person name="Aturaliya R.N."/>
            <person name="Bailey T.L."/>
            <person name="Bansal M."/>
            <person name="Baxter L."/>
            <person name="Beisel K.W."/>
            <person name="Bersano T."/>
            <person name="Bono H."/>
            <person name="Chalk A.M."/>
            <person name="Chiu K.P."/>
            <person name="Choudhary V."/>
            <person name="Christoffels A."/>
            <person name="Clutterbuck D.R."/>
            <person name="Crowe M.L."/>
            <person name="Dalla E."/>
            <person name="Dalrymple B.P."/>
            <person name="de Bono B."/>
            <person name="Della Gatta G."/>
            <person name="di Bernardo D."/>
            <person name="Down T."/>
            <person name="Engstrom P."/>
            <person name="Fagiolini M."/>
            <person name="Faulkner G."/>
            <person name="Fletcher C.F."/>
            <person name="Fukushima T."/>
            <person name="Furuno M."/>
            <person name="Futaki S."/>
            <person name="Gariboldi M."/>
            <person name="Georgii-Hemming P."/>
            <person name="Gingeras T.R."/>
            <person name="Gojobori T."/>
            <person name="Green R.E."/>
            <person name="Gustincich S."/>
            <person name="Harbers M."/>
            <person name="Hayashi Y."/>
            <person name="Hensch T.K."/>
            <person name="Hirokawa N."/>
            <person name="Hill D."/>
            <person name="Huminiecki L."/>
            <person name="Iacono M."/>
            <person name="Ikeo K."/>
            <person name="Iwama A."/>
            <person name="Ishikawa T."/>
            <person name="Jakt M."/>
            <person name="Kanapin A."/>
            <person name="Katoh M."/>
            <person name="Kawasawa Y."/>
            <person name="Kelso J."/>
            <person name="Kitamura H."/>
            <person name="Kitano H."/>
            <person name="Kollias G."/>
            <person name="Krishnan S.P."/>
            <person name="Kruger A."/>
            <person name="Kummerfeld S.K."/>
            <person name="Kurochkin I.V."/>
            <person name="Lareau L.F."/>
            <person name="Lazarevic D."/>
            <person name="Lipovich L."/>
            <person name="Liu J."/>
            <person name="Liuni S."/>
            <person name="McWilliam S."/>
            <person name="Madan Babu M."/>
            <person name="Madera M."/>
            <person name="Marchionni L."/>
            <person name="Matsuda H."/>
            <person name="Matsuzawa S."/>
            <person name="Miki H."/>
            <person name="Mignone F."/>
            <person name="Miyake S."/>
            <person name="Morris K."/>
            <person name="Mottagui-Tabar S."/>
            <person name="Mulder N."/>
            <person name="Nakano N."/>
            <person name="Nakauchi H."/>
            <person name="Ng P."/>
            <person name="Nilsson R."/>
            <person name="Nishiguchi S."/>
            <person name="Nishikawa S."/>
            <person name="Nori F."/>
            <person name="Ohara O."/>
            <person name="Okazaki Y."/>
            <person name="Orlando V."/>
            <person name="Pang K.C."/>
            <person name="Pavan W.J."/>
            <person name="Pavesi G."/>
            <person name="Pesole G."/>
            <person name="Petrovsky N."/>
            <person name="Piazza S."/>
            <person name="Reed J."/>
            <person name="Reid J.F."/>
            <person name="Ring B.Z."/>
            <person name="Ringwald M."/>
            <person name="Rost B."/>
            <person name="Ruan Y."/>
            <person name="Salzberg S.L."/>
            <person name="Sandelin A."/>
            <person name="Schneider C."/>
            <person name="Schoenbach C."/>
            <person name="Sekiguchi K."/>
            <person name="Semple C.A."/>
            <person name="Seno S."/>
            <person name="Sessa L."/>
            <person name="Sheng Y."/>
            <person name="Shibata Y."/>
            <person name="Shimada H."/>
            <person name="Shimada K."/>
            <person name="Silva D."/>
            <person name="Sinclair B."/>
            <person name="Sperling S."/>
            <person name="Stupka E."/>
            <person name="Sugiura K."/>
            <person name="Sultana R."/>
            <person name="Takenaka Y."/>
            <person name="Taki K."/>
            <person name="Tammoja K."/>
            <person name="Tan S.L."/>
            <person name="Tang S."/>
            <person name="Taylor M.S."/>
            <person name="Tegner J."/>
            <person name="Teichmann S.A."/>
            <person name="Ueda H.R."/>
            <person name="van Nimwegen E."/>
            <person name="Verardo R."/>
            <person name="Wei C.L."/>
            <person name="Yagi K."/>
            <person name="Yamanishi H."/>
            <person name="Zabarovsky E."/>
            <person name="Zhu S."/>
            <person name="Zimmer A."/>
            <person name="Hide W."/>
            <person name="Bult C."/>
            <person name="Grimmond S.M."/>
            <person name="Teasdale R.D."/>
            <person name="Liu E.T."/>
            <person name="Brusic V."/>
            <person name="Quackenbush J."/>
            <person name="Wahlestedt C."/>
            <person name="Mattick J.S."/>
            <person name="Hume D.A."/>
            <person name="Kai C."/>
            <person name="Sasaki D."/>
            <person name="Tomaru Y."/>
            <person name="Fukuda S."/>
            <person name="Kanamori-Katayama M."/>
            <person name="Suzuki M."/>
            <person name="Aoki J."/>
            <person name="Arakawa T."/>
            <person name="Iida J."/>
            <person name="Imamura K."/>
            <person name="Itoh M."/>
            <person name="Kato T."/>
            <person name="Kawaji H."/>
            <person name="Kawagashira N."/>
            <person name="Kawashima T."/>
            <person name="Kojima M."/>
            <person name="Kondo S."/>
            <person name="Konno H."/>
            <person name="Nakano K."/>
            <person name="Ninomiya N."/>
            <person name="Nishio T."/>
            <person name="Okada M."/>
            <person name="Plessy C."/>
            <person name="Shibata K."/>
            <person name="Shiraki T."/>
            <person name="Suzuki S."/>
            <person name="Tagami M."/>
            <person name="Waki K."/>
            <person name="Watahiki A."/>
            <person name="Okamura-Oho Y."/>
            <person name="Suzuki H."/>
            <person name="Kawai J."/>
            <person name="Hayashizaki Y."/>
        </authorList>
    </citation>
    <scope>NUCLEOTIDE SEQUENCE [LARGE SCALE MRNA] (ISOFORMS 1 AND 2)</scope>
    <source>
        <strain>C57BL/6J</strain>
        <tissue>Testis</tissue>
    </source>
</reference>
<reference key="4">
    <citation type="journal article" date="2004" name="Genome Res.">
        <title>The status, quality, and expansion of the NIH full-length cDNA project: the Mammalian Gene Collection (MGC).</title>
        <authorList>
            <consortium name="The MGC Project Team"/>
        </authorList>
    </citation>
    <scope>NUCLEOTIDE SEQUENCE [LARGE SCALE MRNA] (ISOFORM 1)</scope>
    <source>
        <tissue>Testis</tissue>
    </source>
</reference>
<reference key="5">
    <citation type="journal article" date="2000" name="Genome Res.">
        <title>The mouse Clock locus: sequence and comparative analysis of 204 kb from mouse chromosome 5.</title>
        <authorList>
            <person name="Wilsbacher L.D."/>
            <person name="Sangoram A.M."/>
            <person name="Antoch M.P."/>
            <person name="Takahashi J.S."/>
        </authorList>
    </citation>
    <scope>NUCLEOTIDE SEQUENCE [GENOMIC DNA] OF 3-240</scope>
    <source>
        <strain>129/Sv</strain>
    </source>
</reference>
<reference key="6">
    <citation type="journal article" date="2010" name="Cell">
        <title>A tissue-specific atlas of mouse protein phosphorylation and expression.</title>
        <authorList>
            <person name="Huttlin E.L."/>
            <person name="Jedrychowski M.P."/>
            <person name="Elias J.E."/>
            <person name="Goswami T."/>
            <person name="Rad R."/>
            <person name="Beausoleil S.A."/>
            <person name="Villen J."/>
            <person name="Haas W."/>
            <person name="Sowa M.E."/>
            <person name="Gygi S.P."/>
        </authorList>
    </citation>
    <scope>IDENTIFICATION BY MASS SPECTROMETRY [LARGE SCALE ANALYSIS]</scope>
    <source>
        <tissue>Testis</tissue>
    </source>
</reference>
<reference key="7">
    <citation type="journal article" date="2022" name="Cell. Death. Discov.">
        <title>PDCL2 is essential for spermiogenesis and male fertility in mice.</title>
        <authorList>
            <person name="Li M."/>
            <person name="Chen Y."/>
            <person name="Ou J."/>
            <person name="Huang J."/>
            <person name="Zhang X."/>
        </authorList>
    </citation>
    <scope>FUNCTION</scope>
    <scope>DISRUPTION PHENOTYPE</scope>
    <scope>TISSUE SPECIFICITY</scope>
    <scope>INTERACTION WITH THE CCT CHAPERONIN COMPLEX AND ACTIN</scope>
</reference>
<reference key="8">
    <citation type="journal article" date="2023" name="Andrology">
        <title>PDCL2 is essential for sperm acrosome formation and male fertility in mice.</title>
        <authorList>
            <person name="Fujihara Y."/>
            <person name="Kobayashi K."/>
            <person name="Abbasi F."/>
            <person name="Endo T."/>
            <person name="Yu Z."/>
            <person name="Ikawa M."/>
            <person name="Matzuk M.M."/>
        </authorList>
    </citation>
    <scope>FUNCTION</scope>
    <scope>DISRUPTION PHENOTYPE</scope>
    <scope>SUBCELLULAR LOCATION</scope>
    <scope>TISSUE SPECIFICITY</scope>
</reference>
<reference key="9">
    <citation type="submission" date="2006-06" db="PDB data bank">
        <title>Solution structure of the thioredoxin-like domain of phosducin-like protein 2 (PDCL2).</title>
        <authorList>
            <consortium name="RIKEN structural genomics initiative (RSGI)"/>
        </authorList>
    </citation>
    <scope>STRUCTURE BY NMR OF 88-209</scope>
</reference>
<organism>
    <name type="scientific">Mus musculus</name>
    <name type="common">Mouse</name>
    <dbReference type="NCBI Taxonomy" id="10090"/>
    <lineage>
        <taxon>Eukaryota</taxon>
        <taxon>Metazoa</taxon>
        <taxon>Chordata</taxon>
        <taxon>Craniata</taxon>
        <taxon>Vertebrata</taxon>
        <taxon>Euteleostomi</taxon>
        <taxon>Mammalia</taxon>
        <taxon>Eutheria</taxon>
        <taxon>Euarchontoglires</taxon>
        <taxon>Glires</taxon>
        <taxon>Rodentia</taxon>
        <taxon>Myomorpha</taxon>
        <taxon>Muroidea</taxon>
        <taxon>Muridae</taxon>
        <taxon>Murinae</taxon>
        <taxon>Mus</taxon>
        <taxon>Mus</taxon>
    </lineage>
</organism>
<keyword id="KW-0002">3D-structure</keyword>
<keyword id="KW-0025">Alternative splicing</keyword>
<keyword id="KW-0221">Differentiation</keyword>
<keyword id="KW-0256">Endoplasmic reticulum</keyword>
<keyword id="KW-1185">Reference proteome</keyword>
<keyword id="KW-0744">Spermatogenesis</keyword>